<keyword id="KW-0963">Cytoplasm</keyword>
<keyword id="KW-0488">Methylation</keyword>
<keyword id="KW-0648">Protein biosynthesis</keyword>
<feature type="chain" id="PRO_0000263295" description="Peptide chain release factor 1">
    <location>
        <begin position="1"/>
        <end position="359"/>
    </location>
</feature>
<feature type="modified residue" description="N5-methylglutamine" evidence="1">
    <location>
        <position position="235"/>
    </location>
</feature>
<sequence length="359" mass="40143">MAELPRERMDQVLKRFELIETQMAAGPSPDAYVKLASEYSELQEVANSIRALRKAEAELEDLDTMLADKSIDREIRELAEIDREEVESRVEDMQQKLQVLLLPKDEADEKNAILEIRAGTGGDEAALFAGDLFRMYERYASERGWRVEVVSASEGEAGGYKEIIASVTGRGVFSRLKFESGVHRVQRVPATEAQGRIHTSAATVAVLPEAEDIDVDIKPEDIRIDTMRASGAGGQHVNTTDSAVRITHLPTGIMVVSAEKSQHQNRARAMQILRARLFDMERSRAANERSEARRLQVGTGDRSERIRTYNFPQGRVTDHRINLTLYKLDRVMEGELDEVIDALIADHQSKLLAAEGAES</sequence>
<gene>
    <name evidence="1" type="primary">prfA</name>
    <name type="ordered locus">Meso_2999</name>
</gene>
<protein>
    <recommendedName>
        <fullName evidence="1">Peptide chain release factor 1</fullName>
        <shortName evidence="1">RF-1</shortName>
    </recommendedName>
</protein>
<dbReference type="EMBL" id="CP000390">
    <property type="protein sequence ID" value="ABG64371.1"/>
    <property type="molecule type" value="Genomic_DNA"/>
</dbReference>
<dbReference type="SMR" id="Q11E04"/>
<dbReference type="STRING" id="266779.Meso_2999"/>
<dbReference type="KEGG" id="mes:Meso_2999"/>
<dbReference type="eggNOG" id="COG0216">
    <property type="taxonomic scope" value="Bacteria"/>
</dbReference>
<dbReference type="HOGENOM" id="CLU_036856_0_1_5"/>
<dbReference type="OrthoDB" id="9806673at2"/>
<dbReference type="GO" id="GO:0005737">
    <property type="term" value="C:cytoplasm"/>
    <property type="evidence" value="ECO:0007669"/>
    <property type="project" value="UniProtKB-SubCell"/>
</dbReference>
<dbReference type="GO" id="GO:0016149">
    <property type="term" value="F:translation release factor activity, codon specific"/>
    <property type="evidence" value="ECO:0007669"/>
    <property type="project" value="UniProtKB-UniRule"/>
</dbReference>
<dbReference type="FunFam" id="3.30.160.20:FF:000004">
    <property type="entry name" value="Peptide chain release factor 1"/>
    <property type="match status" value="1"/>
</dbReference>
<dbReference type="FunFam" id="3.30.70.1660:FF:000002">
    <property type="entry name" value="Peptide chain release factor 1"/>
    <property type="match status" value="1"/>
</dbReference>
<dbReference type="FunFam" id="3.30.70.1660:FF:000004">
    <property type="entry name" value="Peptide chain release factor 1"/>
    <property type="match status" value="1"/>
</dbReference>
<dbReference type="Gene3D" id="3.30.160.20">
    <property type="match status" value="1"/>
</dbReference>
<dbReference type="Gene3D" id="3.30.70.1660">
    <property type="match status" value="2"/>
</dbReference>
<dbReference type="Gene3D" id="6.10.140.1950">
    <property type="match status" value="1"/>
</dbReference>
<dbReference type="HAMAP" id="MF_00093">
    <property type="entry name" value="Rel_fac_1"/>
    <property type="match status" value="1"/>
</dbReference>
<dbReference type="InterPro" id="IPR005139">
    <property type="entry name" value="PCRF"/>
</dbReference>
<dbReference type="InterPro" id="IPR000352">
    <property type="entry name" value="Pep_chain_release_fac_I"/>
</dbReference>
<dbReference type="InterPro" id="IPR045853">
    <property type="entry name" value="Pep_chain_release_fac_I_sf"/>
</dbReference>
<dbReference type="InterPro" id="IPR050057">
    <property type="entry name" value="Prokaryotic/Mito_RF"/>
</dbReference>
<dbReference type="InterPro" id="IPR004373">
    <property type="entry name" value="RF-1"/>
</dbReference>
<dbReference type="NCBIfam" id="TIGR00019">
    <property type="entry name" value="prfA"/>
    <property type="match status" value="1"/>
</dbReference>
<dbReference type="NCBIfam" id="NF001859">
    <property type="entry name" value="PRK00591.1"/>
    <property type="match status" value="1"/>
</dbReference>
<dbReference type="PANTHER" id="PTHR43804">
    <property type="entry name" value="LD18447P"/>
    <property type="match status" value="1"/>
</dbReference>
<dbReference type="PANTHER" id="PTHR43804:SF7">
    <property type="entry name" value="LD18447P"/>
    <property type="match status" value="1"/>
</dbReference>
<dbReference type="Pfam" id="PF03462">
    <property type="entry name" value="PCRF"/>
    <property type="match status" value="1"/>
</dbReference>
<dbReference type="Pfam" id="PF00472">
    <property type="entry name" value="RF-1"/>
    <property type="match status" value="1"/>
</dbReference>
<dbReference type="SMART" id="SM00937">
    <property type="entry name" value="PCRF"/>
    <property type="match status" value="1"/>
</dbReference>
<dbReference type="SUPFAM" id="SSF75620">
    <property type="entry name" value="Release factor"/>
    <property type="match status" value="1"/>
</dbReference>
<dbReference type="PROSITE" id="PS00745">
    <property type="entry name" value="RF_PROK_I"/>
    <property type="match status" value="1"/>
</dbReference>
<evidence type="ECO:0000255" key="1">
    <source>
        <dbReference type="HAMAP-Rule" id="MF_00093"/>
    </source>
</evidence>
<name>RF1_CHESB</name>
<proteinExistence type="inferred from homology"/>
<reference key="1">
    <citation type="submission" date="2006-06" db="EMBL/GenBank/DDBJ databases">
        <title>Complete sequence of chromosome of Mesorhizobium sp. BNC1.</title>
        <authorList>
            <consortium name="US DOE Joint Genome Institute"/>
            <person name="Copeland A."/>
            <person name="Lucas S."/>
            <person name="Lapidus A."/>
            <person name="Barry K."/>
            <person name="Detter J.C."/>
            <person name="Glavina del Rio T."/>
            <person name="Hammon N."/>
            <person name="Israni S."/>
            <person name="Dalin E."/>
            <person name="Tice H."/>
            <person name="Pitluck S."/>
            <person name="Chertkov O."/>
            <person name="Brettin T."/>
            <person name="Bruce D."/>
            <person name="Han C."/>
            <person name="Tapia R."/>
            <person name="Gilna P."/>
            <person name="Schmutz J."/>
            <person name="Larimer F."/>
            <person name="Land M."/>
            <person name="Hauser L."/>
            <person name="Kyrpides N."/>
            <person name="Mikhailova N."/>
            <person name="Richardson P."/>
        </authorList>
    </citation>
    <scope>NUCLEOTIDE SEQUENCE [LARGE SCALE GENOMIC DNA]</scope>
    <source>
        <strain>BNC1</strain>
    </source>
</reference>
<organism>
    <name type="scientific">Chelativorans sp. (strain BNC1)</name>
    <dbReference type="NCBI Taxonomy" id="266779"/>
    <lineage>
        <taxon>Bacteria</taxon>
        <taxon>Pseudomonadati</taxon>
        <taxon>Pseudomonadota</taxon>
        <taxon>Alphaproteobacteria</taxon>
        <taxon>Hyphomicrobiales</taxon>
        <taxon>Phyllobacteriaceae</taxon>
        <taxon>Chelativorans</taxon>
    </lineage>
</organism>
<comment type="function">
    <text evidence="1">Peptide chain release factor 1 directs the termination of translation in response to the peptide chain termination codons UAG and UAA.</text>
</comment>
<comment type="subcellular location">
    <subcellularLocation>
        <location evidence="1">Cytoplasm</location>
    </subcellularLocation>
</comment>
<comment type="PTM">
    <text evidence="1">Methylated by PrmC. Methylation increases the termination efficiency of RF1.</text>
</comment>
<comment type="similarity">
    <text evidence="1">Belongs to the prokaryotic/mitochondrial release factor family.</text>
</comment>
<accession>Q11E04</accession>